<comment type="subcellular location">
    <subcellularLocation>
        <location evidence="1 3">Secreted</location>
    </subcellularLocation>
</comment>
<comment type="tissue specificity">
    <text evidence="1">Expressed in the antennal lobe (at protein level).</text>
</comment>
<keyword id="KW-0027">Amidation</keyword>
<keyword id="KW-0903">Direct protein sequencing</keyword>
<keyword id="KW-0527">Neuropeptide</keyword>
<keyword id="KW-0964">Secreted</keyword>
<organism>
    <name type="scientific">Pyrrhocoris apterus</name>
    <name type="common">Sap sucking bug</name>
    <name type="synonym">Cimex apterus</name>
    <dbReference type="NCBI Taxonomy" id="37000"/>
    <lineage>
        <taxon>Eukaryota</taxon>
        <taxon>Metazoa</taxon>
        <taxon>Ecdysozoa</taxon>
        <taxon>Arthropoda</taxon>
        <taxon>Hexapoda</taxon>
        <taxon>Insecta</taxon>
        <taxon>Pterygota</taxon>
        <taxon>Neoptera</taxon>
        <taxon>Paraneoptera</taxon>
        <taxon>Hemiptera</taxon>
        <taxon>Heteroptera</taxon>
        <taxon>Panheteroptera</taxon>
        <taxon>Pentatomomorpha</taxon>
        <taxon>Pyrrhocoroidea</taxon>
        <taxon>Pyrrhocoridae</taxon>
        <taxon>Pyrrhocoris</taxon>
    </lineage>
</organism>
<feature type="peptide" id="PRO_0000395663" description="Tachykinin-related peptide 2" evidence="1">
    <location>
        <begin position="1"/>
        <end position="10"/>
    </location>
</feature>
<feature type="modified residue" description="Arginine amide" evidence="1">
    <location>
        <position position="10"/>
    </location>
</feature>
<sequence>APASGFFGMR</sequence>
<reference evidence="3" key="1">
    <citation type="journal article" date="2009" name="Peptides">
        <title>Neuropeptides in Heteroptera: identification of allatotropin-related peptide and tachykinin-related peptides using MALDI-TOF mass spectrometry.</title>
        <authorList>
            <person name="Neupert S."/>
            <person name="Russell W.K."/>
            <person name="Russell D.H."/>
            <person name="Lopez J.D. Jr."/>
            <person name="Predel R."/>
            <person name="Nachman R.J."/>
        </authorList>
    </citation>
    <scope>PROTEIN SEQUENCE</scope>
    <scope>SUBCELLULAR LOCATION</scope>
    <scope>TISSUE SPECIFICITY</scope>
    <scope>AMIDATION AT ARG-10</scope>
    <source>
        <tissue evidence="1">Antennal lobe</tissue>
    </source>
</reference>
<proteinExistence type="evidence at protein level"/>
<accession>P86595</accession>
<protein>
    <recommendedName>
        <fullName evidence="2">Tachykinin-related peptide 2</fullName>
        <shortName evidence="2">TKRP-2</shortName>
    </recommendedName>
</protein>
<dbReference type="GO" id="GO:0005576">
    <property type="term" value="C:extracellular region"/>
    <property type="evidence" value="ECO:0007005"/>
    <property type="project" value="UniProtKB"/>
</dbReference>
<dbReference type="GO" id="GO:0007218">
    <property type="term" value="P:neuropeptide signaling pathway"/>
    <property type="evidence" value="ECO:0007669"/>
    <property type="project" value="UniProtKB-KW"/>
</dbReference>
<name>TRP2_PYRAP</name>
<evidence type="ECO:0000269" key="1">
    <source>
    </source>
</evidence>
<evidence type="ECO:0000303" key="2">
    <source>
    </source>
</evidence>
<evidence type="ECO:0000305" key="3"/>